<gene>
    <name evidence="1" type="primary">fadR</name>
    <name type="ordered locus">SeD_A1513</name>
</gene>
<reference key="1">
    <citation type="journal article" date="2011" name="J. Bacteriol.">
        <title>Comparative genomics of 28 Salmonella enterica isolates: evidence for CRISPR-mediated adaptive sublineage evolution.</title>
        <authorList>
            <person name="Fricke W.F."/>
            <person name="Mammel M.K."/>
            <person name="McDermott P.F."/>
            <person name="Tartera C."/>
            <person name="White D.G."/>
            <person name="Leclerc J.E."/>
            <person name="Ravel J."/>
            <person name="Cebula T.A."/>
        </authorList>
    </citation>
    <scope>NUCLEOTIDE SEQUENCE [LARGE SCALE GENOMIC DNA]</scope>
    <source>
        <strain>CT_02021853</strain>
    </source>
</reference>
<feature type="chain" id="PRO_1000132325" description="Fatty acid metabolism regulator protein">
    <location>
        <begin position="1"/>
        <end position="239"/>
    </location>
</feature>
<feature type="domain" description="HTH gntR-type" evidence="1">
    <location>
        <begin position="6"/>
        <end position="74"/>
    </location>
</feature>
<feature type="DNA-binding region" description="H-T-H motif" evidence="1">
    <location>
        <begin position="34"/>
        <end position="53"/>
    </location>
</feature>
<name>FADR_SALDC</name>
<accession>B5FTM9</accession>
<protein>
    <recommendedName>
        <fullName evidence="1">Fatty acid metabolism regulator protein</fullName>
    </recommendedName>
</protein>
<proteinExistence type="inferred from homology"/>
<evidence type="ECO:0000255" key="1">
    <source>
        <dbReference type="HAMAP-Rule" id="MF_00696"/>
    </source>
</evidence>
<comment type="function">
    <text evidence="1">Multifunctional regulator of fatty acid metabolism.</text>
</comment>
<comment type="subunit">
    <text evidence="1">Homodimer.</text>
</comment>
<comment type="subcellular location">
    <subcellularLocation>
        <location evidence="1">Cytoplasm</location>
    </subcellularLocation>
</comment>
<dbReference type="EMBL" id="CP001144">
    <property type="protein sequence ID" value="ACH77324.1"/>
    <property type="molecule type" value="Genomic_DNA"/>
</dbReference>
<dbReference type="RefSeq" id="WP_000234826.1">
    <property type="nucleotide sequence ID" value="NC_011205.1"/>
</dbReference>
<dbReference type="SMR" id="B5FTM9"/>
<dbReference type="KEGG" id="sed:SeD_A1513"/>
<dbReference type="HOGENOM" id="CLU_017584_9_4_6"/>
<dbReference type="Proteomes" id="UP000008322">
    <property type="component" value="Chromosome"/>
</dbReference>
<dbReference type="GO" id="GO:0005737">
    <property type="term" value="C:cytoplasm"/>
    <property type="evidence" value="ECO:0007669"/>
    <property type="project" value="UniProtKB-SubCell"/>
</dbReference>
<dbReference type="GO" id="GO:0003677">
    <property type="term" value="F:DNA binding"/>
    <property type="evidence" value="ECO:0007669"/>
    <property type="project" value="UniProtKB-KW"/>
</dbReference>
<dbReference type="GO" id="GO:0003700">
    <property type="term" value="F:DNA-binding transcription factor activity"/>
    <property type="evidence" value="ECO:0007669"/>
    <property type="project" value="UniProtKB-UniRule"/>
</dbReference>
<dbReference type="GO" id="GO:0000062">
    <property type="term" value="F:fatty-acyl-CoA binding"/>
    <property type="evidence" value="ECO:0007669"/>
    <property type="project" value="InterPro"/>
</dbReference>
<dbReference type="GO" id="GO:0006631">
    <property type="term" value="P:fatty acid metabolic process"/>
    <property type="evidence" value="ECO:0007669"/>
    <property type="project" value="UniProtKB-KW"/>
</dbReference>
<dbReference type="GO" id="GO:0019217">
    <property type="term" value="P:regulation of fatty acid metabolic process"/>
    <property type="evidence" value="ECO:0007669"/>
    <property type="project" value="UniProtKB-UniRule"/>
</dbReference>
<dbReference type="CDD" id="cd07377">
    <property type="entry name" value="WHTH_GntR"/>
    <property type="match status" value="1"/>
</dbReference>
<dbReference type="FunFam" id="1.10.10.10:FF:000036">
    <property type="entry name" value="Fatty acid metabolism regulator protein"/>
    <property type="match status" value="1"/>
</dbReference>
<dbReference type="FunFam" id="1.20.120.530:FF:000003">
    <property type="entry name" value="Fatty acid metabolism regulator protein"/>
    <property type="match status" value="1"/>
</dbReference>
<dbReference type="Gene3D" id="1.20.120.530">
    <property type="entry name" value="GntR ligand-binding domain-like"/>
    <property type="match status" value="1"/>
</dbReference>
<dbReference type="Gene3D" id="1.10.10.10">
    <property type="entry name" value="Winged helix-like DNA-binding domain superfamily/Winged helix DNA-binding domain"/>
    <property type="match status" value="1"/>
</dbReference>
<dbReference type="HAMAP" id="MF_00696">
    <property type="entry name" value="HTH_FadR"/>
    <property type="match status" value="1"/>
</dbReference>
<dbReference type="InterPro" id="IPR014178">
    <property type="entry name" value="FA-response_TF_FadR"/>
</dbReference>
<dbReference type="InterPro" id="IPR028374">
    <property type="entry name" value="FadR_C"/>
</dbReference>
<dbReference type="InterPro" id="IPR008920">
    <property type="entry name" value="TF_FadR/GntR_C"/>
</dbReference>
<dbReference type="InterPro" id="IPR000524">
    <property type="entry name" value="Tscrpt_reg_HTH_GntR"/>
</dbReference>
<dbReference type="InterPro" id="IPR036388">
    <property type="entry name" value="WH-like_DNA-bd_sf"/>
</dbReference>
<dbReference type="InterPro" id="IPR036390">
    <property type="entry name" value="WH_DNA-bd_sf"/>
</dbReference>
<dbReference type="NCBIfam" id="TIGR02812">
    <property type="entry name" value="fadR_gamma"/>
    <property type="match status" value="1"/>
</dbReference>
<dbReference type="NCBIfam" id="NF003444">
    <property type="entry name" value="PRK04984.1"/>
    <property type="match status" value="1"/>
</dbReference>
<dbReference type="PANTHER" id="PTHR43537:SF52">
    <property type="entry name" value="FATTY ACID METABOLISM REGULATOR PROTEIN"/>
    <property type="match status" value="1"/>
</dbReference>
<dbReference type="PANTHER" id="PTHR43537">
    <property type="entry name" value="TRANSCRIPTIONAL REGULATOR, GNTR FAMILY"/>
    <property type="match status" value="1"/>
</dbReference>
<dbReference type="Pfam" id="PF07840">
    <property type="entry name" value="FadR_C"/>
    <property type="match status" value="1"/>
</dbReference>
<dbReference type="Pfam" id="PF00392">
    <property type="entry name" value="GntR"/>
    <property type="match status" value="1"/>
</dbReference>
<dbReference type="PRINTS" id="PR00035">
    <property type="entry name" value="HTHGNTR"/>
</dbReference>
<dbReference type="SMART" id="SM00345">
    <property type="entry name" value="HTH_GNTR"/>
    <property type="match status" value="1"/>
</dbReference>
<dbReference type="SUPFAM" id="SSF48008">
    <property type="entry name" value="GntR ligand-binding domain-like"/>
    <property type="match status" value="1"/>
</dbReference>
<dbReference type="SUPFAM" id="SSF46785">
    <property type="entry name" value="Winged helix' DNA-binding domain"/>
    <property type="match status" value="1"/>
</dbReference>
<dbReference type="PROSITE" id="PS50949">
    <property type="entry name" value="HTH_GNTR"/>
    <property type="match status" value="1"/>
</dbReference>
<organism>
    <name type="scientific">Salmonella dublin (strain CT_02021853)</name>
    <dbReference type="NCBI Taxonomy" id="439851"/>
    <lineage>
        <taxon>Bacteria</taxon>
        <taxon>Pseudomonadati</taxon>
        <taxon>Pseudomonadota</taxon>
        <taxon>Gammaproteobacteria</taxon>
        <taxon>Enterobacterales</taxon>
        <taxon>Enterobacteriaceae</taxon>
        <taxon>Salmonella</taxon>
    </lineage>
</organism>
<sequence length="239" mass="26987">MVIKAQSPAGFAEEYIIESIWNNRFPPGTILPAERELSELIGVTRTTLREVLQRLARDGWLTIQHGKPTKVNNFWETSGLNILETLARLDHESVPQLIDNLLSVRTNISTIFIRTALRQHPDKAQEVLATAHEVADHADAFADLDYNIFRGLAFASGNPIYGLILNGMKGLYTRIGRHYFANPEARSLALGFYHKLSSLCEQGAHDQVYETVRRYGHDSGEIWHRMQKNLPGDLAIQGR</sequence>
<keyword id="KW-0010">Activator</keyword>
<keyword id="KW-0963">Cytoplasm</keyword>
<keyword id="KW-0238">DNA-binding</keyword>
<keyword id="KW-0276">Fatty acid metabolism</keyword>
<keyword id="KW-0443">Lipid metabolism</keyword>
<keyword id="KW-0678">Repressor</keyword>
<keyword id="KW-0804">Transcription</keyword>
<keyword id="KW-0805">Transcription regulation</keyword>